<proteinExistence type="inferred from homology"/>
<dbReference type="EMBL" id="AE000511">
    <property type="protein sequence ID" value="AAD08172.1"/>
    <property type="molecule type" value="Genomic_DNA"/>
</dbReference>
<dbReference type="PIR" id="B64661">
    <property type="entry name" value="B64661"/>
</dbReference>
<dbReference type="RefSeq" id="NP_207921.1">
    <property type="nucleotide sequence ID" value="NC_000915.1"/>
</dbReference>
<dbReference type="RefSeq" id="WP_000887310.1">
    <property type="nucleotide sequence ID" value="NC_018939.1"/>
</dbReference>
<dbReference type="SMR" id="O25755"/>
<dbReference type="DIP" id="DIP-3418N"/>
<dbReference type="FunCoup" id="O25755">
    <property type="interactions" value="213"/>
</dbReference>
<dbReference type="IntAct" id="O25755">
    <property type="interactions" value="1"/>
</dbReference>
<dbReference type="MINT" id="O25755"/>
<dbReference type="STRING" id="85962.HP_1130"/>
<dbReference type="PaxDb" id="85962-C694_05830"/>
<dbReference type="EnsemblBacteria" id="AAD08172">
    <property type="protein sequence ID" value="AAD08172"/>
    <property type="gene ID" value="HP_1130"/>
</dbReference>
<dbReference type="KEGG" id="heo:C694_05830"/>
<dbReference type="KEGG" id="hpy:HP_1130"/>
<dbReference type="PATRIC" id="fig|85962.47.peg.1212"/>
<dbReference type="eggNOG" id="COG0811">
    <property type="taxonomic scope" value="Bacteria"/>
</dbReference>
<dbReference type="InParanoid" id="O25755"/>
<dbReference type="OrthoDB" id="9805133at2"/>
<dbReference type="PhylomeDB" id="O25755"/>
<dbReference type="Proteomes" id="UP000000429">
    <property type="component" value="Chromosome"/>
</dbReference>
<dbReference type="GO" id="GO:0005886">
    <property type="term" value="C:plasma membrane"/>
    <property type="evidence" value="ECO:0000318"/>
    <property type="project" value="GO_Central"/>
</dbReference>
<dbReference type="GO" id="GO:0017038">
    <property type="term" value="P:protein import"/>
    <property type="evidence" value="ECO:0000318"/>
    <property type="project" value="GO_Central"/>
</dbReference>
<dbReference type="InterPro" id="IPR017269">
    <property type="entry name" value="Biopolymer_transpt_ExbB-like_1"/>
</dbReference>
<dbReference type="InterPro" id="IPR050790">
    <property type="entry name" value="ExbB/TolQ_transport"/>
</dbReference>
<dbReference type="InterPro" id="IPR002898">
    <property type="entry name" value="MotA_ExbB_proton_chnl"/>
</dbReference>
<dbReference type="PANTHER" id="PTHR30625:SF15">
    <property type="entry name" value="BIOPOLYMER TRANSPORT PROTEIN EXBB"/>
    <property type="match status" value="1"/>
</dbReference>
<dbReference type="PANTHER" id="PTHR30625">
    <property type="entry name" value="PROTEIN TOLQ"/>
    <property type="match status" value="1"/>
</dbReference>
<dbReference type="Pfam" id="PF01618">
    <property type="entry name" value="MotA_ExbB"/>
    <property type="match status" value="1"/>
</dbReference>
<dbReference type="PIRSF" id="PIRSF037713">
    <property type="entry name" value="Biopolymer_transpt_exbB-like"/>
    <property type="match status" value="1"/>
</dbReference>
<accession>O25755</accession>
<keyword id="KW-0997">Cell inner membrane</keyword>
<keyword id="KW-1003">Cell membrane</keyword>
<keyword id="KW-0472">Membrane</keyword>
<keyword id="KW-0653">Protein transport</keyword>
<keyword id="KW-1185">Reference proteome</keyword>
<keyword id="KW-0812">Transmembrane</keyword>
<keyword id="KW-1133">Transmembrane helix</keyword>
<keyword id="KW-0813">Transport</keyword>
<feature type="chain" id="PRO_0000145815" description="Putative biopolymer transport protein ExbB-like 1">
    <location>
        <begin position="1"/>
        <end position="189"/>
    </location>
</feature>
<feature type="transmembrane region" description="Helical" evidence="1">
    <location>
        <begin position="14"/>
        <end position="34"/>
    </location>
</feature>
<feature type="transmembrane region" description="Helical" evidence="1">
    <location>
        <begin position="99"/>
        <end position="119"/>
    </location>
</feature>
<feature type="transmembrane region" description="Helical" evidence="1">
    <location>
        <begin position="147"/>
        <end position="167"/>
    </location>
</feature>
<name>EXBL1_HELPY</name>
<comment type="subcellular location">
    <subcellularLocation>
        <location evidence="2">Cell inner membrane</location>
        <topology evidence="2">Multi-pass membrane protein</topology>
    </subcellularLocation>
</comment>
<comment type="similarity">
    <text evidence="2">Belongs to the ExbB/TolQ family.</text>
</comment>
<evidence type="ECO:0000255" key="1"/>
<evidence type="ECO:0000305" key="2"/>
<sequence length="189" mass="21179">MLDSIVYFFNKSGFVTTLVLVWISLYLVMTLWVFLYKSIALKIELKREMQSLSNILNGAQDAPEHFMFNKKRNDETKRYSNELLQAWKHQVLKQSTTGLVVLSIISSTAPFIGLFGTVVEILEAFNNLGTLGQASFGVIAPIISKALIATAAGILAAIPAYSFYLILKRKVYDLSVYVQMQVDILSSKK</sequence>
<gene>
    <name type="ordered locus">HP_1130</name>
</gene>
<organism>
    <name type="scientific">Helicobacter pylori (strain ATCC 700392 / 26695)</name>
    <name type="common">Campylobacter pylori</name>
    <dbReference type="NCBI Taxonomy" id="85962"/>
    <lineage>
        <taxon>Bacteria</taxon>
        <taxon>Pseudomonadati</taxon>
        <taxon>Campylobacterota</taxon>
        <taxon>Epsilonproteobacteria</taxon>
        <taxon>Campylobacterales</taxon>
        <taxon>Helicobacteraceae</taxon>
        <taxon>Helicobacter</taxon>
    </lineage>
</organism>
<reference key="1">
    <citation type="journal article" date="1997" name="Nature">
        <title>The complete genome sequence of the gastric pathogen Helicobacter pylori.</title>
        <authorList>
            <person name="Tomb J.-F."/>
            <person name="White O."/>
            <person name="Kerlavage A.R."/>
            <person name="Clayton R.A."/>
            <person name="Sutton G.G."/>
            <person name="Fleischmann R.D."/>
            <person name="Ketchum K.A."/>
            <person name="Klenk H.-P."/>
            <person name="Gill S.R."/>
            <person name="Dougherty B.A."/>
            <person name="Nelson K.E."/>
            <person name="Quackenbush J."/>
            <person name="Zhou L."/>
            <person name="Kirkness E.F."/>
            <person name="Peterson S.N."/>
            <person name="Loftus B.J."/>
            <person name="Richardson D.L."/>
            <person name="Dodson R.J."/>
            <person name="Khalak H.G."/>
            <person name="Glodek A."/>
            <person name="McKenney K."/>
            <person name="FitzGerald L.M."/>
            <person name="Lee N."/>
            <person name="Adams M.D."/>
            <person name="Hickey E.K."/>
            <person name="Berg D.E."/>
            <person name="Gocayne J.D."/>
            <person name="Utterback T.R."/>
            <person name="Peterson J.D."/>
            <person name="Kelley J.M."/>
            <person name="Cotton M.D."/>
            <person name="Weidman J.F."/>
            <person name="Fujii C."/>
            <person name="Bowman C."/>
            <person name="Watthey L."/>
            <person name="Wallin E."/>
            <person name="Hayes W.S."/>
            <person name="Borodovsky M."/>
            <person name="Karp P.D."/>
            <person name="Smith H.O."/>
            <person name="Fraser C.M."/>
            <person name="Venter J.C."/>
        </authorList>
    </citation>
    <scope>NUCLEOTIDE SEQUENCE [LARGE SCALE GENOMIC DNA]</scope>
    <source>
        <strain>ATCC 700392 / 26695</strain>
    </source>
</reference>
<protein>
    <recommendedName>
        <fullName>Putative biopolymer transport protein ExbB-like 1</fullName>
    </recommendedName>
</protein>